<evidence type="ECO:0000255" key="1">
    <source>
        <dbReference type="HAMAP-Rule" id="MF_01646"/>
    </source>
</evidence>
<protein>
    <recommendedName>
        <fullName evidence="1">Siroheme synthase</fullName>
    </recommendedName>
    <domain>
        <recommendedName>
            <fullName evidence="1">Uroporphyrinogen-III C-methyltransferase</fullName>
            <shortName evidence="1">Urogen III methylase</shortName>
            <ecNumber evidence="1">2.1.1.107</ecNumber>
        </recommendedName>
        <alternativeName>
            <fullName evidence="1">SUMT</fullName>
        </alternativeName>
        <alternativeName>
            <fullName evidence="1">Uroporphyrinogen III methylase</fullName>
            <shortName evidence="1">UROM</shortName>
        </alternativeName>
    </domain>
    <domain>
        <recommendedName>
            <fullName evidence="1">Precorrin-2 dehydrogenase</fullName>
            <ecNumber evidence="1">1.3.1.76</ecNumber>
        </recommendedName>
    </domain>
    <domain>
        <recommendedName>
            <fullName evidence="1">Sirohydrochlorin ferrochelatase</fullName>
            <ecNumber evidence="1">4.99.1.4</ecNumber>
        </recommendedName>
    </domain>
</protein>
<name>CYSG_PSEAE</name>
<gene>
    <name evidence="1" type="primary">cysG</name>
    <name type="ordered locus">PA2611</name>
</gene>
<comment type="function">
    <text evidence="1">Multifunctional enzyme that catalyzes the SAM-dependent methylations of uroporphyrinogen III at position C-2 and C-7 to form precorrin-2 via precorrin-1. Then it catalyzes the NAD-dependent ring dehydrogenation of precorrin-2 to yield sirohydrochlorin. Finally, it catalyzes the ferrochelation of sirohydrochlorin to yield siroheme.</text>
</comment>
<comment type="catalytic activity">
    <reaction evidence="1">
        <text>uroporphyrinogen III + 2 S-adenosyl-L-methionine = precorrin-2 + 2 S-adenosyl-L-homocysteine + H(+)</text>
        <dbReference type="Rhea" id="RHEA:32459"/>
        <dbReference type="ChEBI" id="CHEBI:15378"/>
        <dbReference type="ChEBI" id="CHEBI:57308"/>
        <dbReference type="ChEBI" id="CHEBI:57856"/>
        <dbReference type="ChEBI" id="CHEBI:58827"/>
        <dbReference type="ChEBI" id="CHEBI:59789"/>
        <dbReference type="EC" id="2.1.1.107"/>
    </reaction>
</comment>
<comment type="catalytic activity">
    <reaction evidence="1">
        <text>precorrin-2 + NAD(+) = sirohydrochlorin + NADH + 2 H(+)</text>
        <dbReference type="Rhea" id="RHEA:15613"/>
        <dbReference type="ChEBI" id="CHEBI:15378"/>
        <dbReference type="ChEBI" id="CHEBI:57540"/>
        <dbReference type="ChEBI" id="CHEBI:57945"/>
        <dbReference type="ChEBI" id="CHEBI:58351"/>
        <dbReference type="ChEBI" id="CHEBI:58827"/>
        <dbReference type="EC" id="1.3.1.76"/>
    </reaction>
</comment>
<comment type="catalytic activity">
    <reaction evidence="1">
        <text>siroheme + 2 H(+) = sirohydrochlorin + Fe(2+)</text>
        <dbReference type="Rhea" id="RHEA:24360"/>
        <dbReference type="ChEBI" id="CHEBI:15378"/>
        <dbReference type="ChEBI" id="CHEBI:29033"/>
        <dbReference type="ChEBI" id="CHEBI:58351"/>
        <dbReference type="ChEBI" id="CHEBI:60052"/>
        <dbReference type="EC" id="4.99.1.4"/>
    </reaction>
</comment>
<comment type="pathway">
    <text evidence="1">Cofactor biosynthesis; adenosylcobalamin biosynthesis; precorrin-2 from uroporphyrinogen III: step 1/1.</text>
</comment>
<comment type="pathway">
    <text evidence="1">Cofactor biosynthesis; adenosylcobalamin biosynthesis; sirohydrochlorin from precorrin-2: step 1/1.</text>
</comment>
<comment type="pathway">
    <text evidence="1">Porphyrin-containing compound metabolism; siroheme biosynthesis; precorrin-2 from uroporphyrinogen III: step 1/1.</text>
</comment>
<comment type="pathway">
    <text evidence="1">Porphyrin-containing compound metabolism; siroheme biosynthesis; siroheme from sirohydrochlorin: step 1/1.</text>
</comment>
<comment type="pathway">
    <text evidence="1">Porphyrin-containing compound metabolism; siroheme biosynthesis; sirohydrochlorin from precorrin-2: step 1/1.</text>
</comment>
<comment type="similarity">
    <text evidence="1">In the N-terminal section; belongs to the precorrin-2 dehydrogenase / sirohydrochlorin ferrochelatase family.</text>
</comment>
<comment type="similarity">
    <text evidence="1">In the C-terminal section; belongs to the precorrin methyltransferase family.</text>
</comment>
<proteinExistence type="inferred from homology"/>
<feature type="chain" id="PRO_0000330533" description="Siroheme synthase">
    <location>
        <begin position="1"/>
        <end position="465"/>
    </location>
</feature>
<feature type="region of interest" description="Precorrin-2 dehydrogenase /sirohydrochlorin ferrochelatase" evidence="1">
    <location>
        <begin position="1"/>
        <end position="203"/>
    </location>
</feature>
<feature type="region of interest" description="Uroporphyrinogen-III C-methyltransferase" evidence="1">
    <location>
        <begin position="217"/>
        <end position="465"/>
    </location>
</feature>
<feature type="active site" description="Proton acceptor" evidence="1">
    <location>
        <position position="249"/>
    </location>
</feature>
<feature type="active site" description="Proton donor" evidence="1">
    <location>
        <position position="271"/>
    </location>
</feature>
<feature type="binding site" evidence="1">
    <location>
        <begin position="22"/>
        <end position="23"/>
    </location>
    <ligand>
        <name>NAD(+)</name>
        <dbReference type="ChEBI" id="CHEBI:57540"/>
    </ligand>
</feature>
<feature type="binding site" evidence="1">
    <location>
        <begin position="43"/>
        <end position="44"/>
    </location>
    <ligand>
        <name>NAD(+)</name>
        <dbReference type="ChEBI" id="CHEBI:57540"/>
    </ligand>
</feature>
<feature type="binding site" evidence="1">
    <location>
        <position position="226"/>
    </location>
    <ligand>
        <name>S-adenosyl-L-methionine</name>
        <dbReference type="ChEBI" id="CHEBI:59789"/>
    </ligand>
</feature>
<feature type="binding site" evidence="1">
    <location>
        <begin position="302"/>
        <end position="304"/>
    </location>
    <ligand>
        <name>S-adenosyl-L-methionine</name>
        <dbReference type="ChEBI" id="CHEBI:59789"/>
    </ligand>
</feature>
<feature type="binding site" evidence="1">
    <location>
        <position position="307"/>
    </location>
    <ligand>
        <name>S-adenosyl-L-methionine</name>
        <dbReference type="ChEBI" id="CHEBI:59789"/>
    </ligand>
</feature>
<feature type="binding site" evidence="1">
    <location>
        <begin position="332"/>
        <end position="333"/>
    </location>
    <ligand>
        <name>S-adenosyl-L-methionine</name>
        <dbReference type="ChEBI" id="CHEBI:59789"/>
    </ligand>
</feature>
<feature type="binding site" evidence="1">
    <location>
        <position position="384"/>
    </location>
    <ligand>
        <name>S-adenosyl-L-methionine</name>
        <dbReference type="ChEBI" id="CHEBI:59789"/>
    </ligand>
</feature>
<feature type="binding site" evidence="1">
    <location>
        <position position="413"/>
    </location>
    <ligand>
        <name>S-adenosyl-L-methionine</name>
        <dbReference type="ChEBI" id="CHEBI:59789"/>
    </ligand>
</feature>
<feature type="modified residue" description="Phosphoserine" evidence="1">
    <location>
        <position position="128"/>
    </location>
</feature>
<reference key="1">
    <citation type="journal article" date="2000" name="Nature">
        <title>Complete genome sequence of Pseudomonas aeruginosa PAO1, an opportunistic pathogen.</title>
        <authorList>
            <person name="Stover C.K."/>
            <person name="Pham X.-Q.T."/>
            <person name="Erwin A.L."/>
            <person name="Mizoguchi S.D."/>
            <person name="Warrener P."/>
            <person name="Hickey M.J."/>
            <person name="Brinkman F.S.L."/>
            <person name="Hufnagle W.O."/>
            <person name="Kowalik D.J."/>
            <person name="Lagrou M."/>
            <person name="Garber R.L."/>
            <person name="Goltry L."/>
            <person name="Tolentino E."/>
            <person name="Westbrock-Wadman S."/>
            <person name="Yuan Y."/>
            <person name="Brody L.L."/>
            <person name="Coulter S.N."/>
            <person name="Folger K.R."/>
            <person name="Kas A."/>
            <person name="Larbig K."/>
            <person name="Lim R.M."/>
            <person name="Smith K.A."/>
            <person name="Spencer D.H."/>
            <person name="Wong G.K.-S."/>
            <person name="Wu Z."/>
            <person name="Paulsen I.T."/>
            <person name="Reizer J."/>
            <person name="Saier M.H. Jr."/>
            <person name="Hancock R.E.W."/>
            <person name="Lory S."/>
            <person name="Olson M.V."/>
        </authorList>
    </citation>
    <scope>NUCLEOTIDE SEQUENCE [LARGE SCALE GENOMIC DNA]</scope>
    <source>
        <strain>ATCC 15692 / DSM 22644 / CIP 104116 / JCM 14847 / LMG 12228 / 1C / PRS 101 / PAO1</strain>
    </source>
</reference>
<accession>Q9I0M7</accession>
<organism>
    <name type="scientific">Pseudomonas aeruginosa (strain ATCC 15692 / DSM 22644 / CIP 104116 / JCM 14847 / LMG 12228 / 1C / PRS 101 / PAO1)</name>
    <dbReference type="NCBI Taxonomy" id="208964"/>
    <lineage>
        <taxon>Bacteria</taxon>
        <taxon>Pseudomonadati</taxon>
        <taxon>Pseudomonadota</taxon>
        <taxon>Gammaproteobacteria</taxon>
        <taxon>Pseudomonadales</taxon>
        <taxon>Pseudomonadaceae</taxon>
        <taxon>Pseudomonas</taxon>
    </lineage>
</organism>
<keyword id="KW-0169">Cobalamin biosynthesis</keyword>
<keyword id="KW-0456">Lyase</keyword>
<keyword id="KW-0489">Methyltransferase</keyword>
<keyword id="KW-0511">Multifunctional enzyme</keyword>
<keyword id="KW-0520">NAD</keyword>
<keyword id="KW-0560">Oxidoreductase</keyword>
<keyword id="KW-0597">Phosphoprotein</keyword>
<keyword id="KW-0627">Porphyrin biosynthesis</keyword>
<keyword id="KW-1185">Reference proteome</keyword>
<keyword id="KW-0949">S-adenosyl-L-methionine</keyword>
<keyword id="KW-0808">Transferase</keyword>
<dbReference type="EC" id="2.1.1.107" evidence="1"/>
<dbReference type="EC" id="1.3.1.76" evidence="1"/>
<dbReference type="EC" id="4.99.1.4" evidence="1"/>
<dbReference type="EMBL" id="AE004091">
    <property type="protein sequence ID" value="AAG05999.1"/>
    <property type="molecule type" value="Genomic_DNA"/>
</dbReference>
<dbReference type="PIR" id="F83320">
    <property type="entry name" value="F83320"/>
</dbReference>
<dbReference type="RefSeq" id="NP_251301.1">
    <property type="nucleotide sequence ID" value="NC_002516.2"/>
</dbReference>
<dbReference type="RefSeq" id="WP_003113366.1">
    <property type="nucleotide sequence ID" value="NZ_QZGE01000008.1"/>
</dbReference>
<dbReference type="SMR" id="Q9I0M7"/>
<dbReference type="FunCoup" id="Q9I0M7">
    <property type="interactions" value="313"/>
</dbReference>
<dbReference type="STRING" id="208964.PA2611"/>
<dbReference type="PaxDb" id="208964-PA2611"/>
<dbReference type="GeneID" id="882317"/>
<dbReference type="KEGG" id="pae:PA2611"/>
<dbReference type="PATRIC" id="fig|208964.12.peg.2732"/>
<dbReference type="PseudoCAP" id="PA2611"/>
<dbReference type="HOGENOM" id="CLU_011276_2_1_6"/>
<dbReference type="InParanoid" id="Q9I0M7"/>
<dbReference type="OrthoDB" id="9815856at2"/>
<dbReference type="PhylomeDB" id="Q9I0M7"/>
<dbReference type="BioCyc" id="PAER208964:G1FZ6-2651-MONOMER"/>
<dbReference type="UniPathway" id="UPA00148">
    <property type="reaction ID" value="UER00211"/>
</dbReference>
<dbReference type="UniPathway" id="UPA00148">
    <property type="reaction ID" value="UER00222"/>
</dbReference>
<dbReference type="UniPathway" id="UPA00262">
    <property type="reaction ID" value="UER00211"/>
</dbReference>
<dbReference type="UniPathway" id="UPA00262">
    <property type="reaction ID" value="UER00222"/>
</dbReference>
<dbReference type="UniPathway" id="UPA00262">
    <property type="reaction ID" value="UER00376"/>
</dbReference>
<dbReference type="Proteomes" id="UP000002438">
    <property type="component" value="Chromosome"/>
</dbReference>
<dbReference type="GO" id="GO:0051287">
    <property type="term" value="F:NAD binding"/>
    <property type="evidence" value="ECO:0007669"/>
    <property type="project" value="InterPro"/>
</dbReference>
<dbReference type="GO" id="GO:0043115">
    <property type="term" value="F:precorrin-2 dehydrogenase activity"/>
    <property type="evidence" value="ECO:0007669"/>
    <property type="project" value="UniProtKB-UniRule"/>
</dbReference>
<dbReference type="GO" id="GO:0051266">
    <property type="term" value="F:sirohydrochlorin ferrochelatase activity"/>
    <property type="evidence" value="ECO:0007669"/>
    <property type="project" value="UniProtKB-EC"/>
</dbReference>
<dbReference type="GO" id="GO:0004851">
    <property type="term" value="F:uroporphyrin-III C-methyltransferase activity"/>
    <property type="evidence" value="ECO:0000318"/>
    <property type="project" value="GO_Central"/>
</dbReference>
<dbReference type="GO" id="GO:0009236">
    <property type="term" value="P:cobalamin biosynthetic process"/>
    <property type="evidence" value="ECO:0007669"/>
    <property type="project" value="UniProtKB-UniRule"/>
</dbReference>
<dbReference type="GO" id="GO:0032259">
    <property type="term" value="P:methylation"/>
    <property type="evidence" value="ECO:0007669"/>
    <property type="project" value="UniProtKB-KW"/>
</dbReference>
<dbReference type="GO" id="GO:0019354">
    <property type="term" value="P:siroheme biosynthetic process"/>
    <property type="evidence" value="ECO:0000318"/>
    <property type="project" value="GO_Central"/>
</dbReference>
<dbReference type="CDD" id="cd11642">
    <property type="entry name" value="SUMT"/>
    <property type="match status" value="1"/>
</dbReference>
<dbReference type="FunFam" id="3.30.160.110:FF:000001">
    <property type="entry name" value="Siroheme synthase"/>
    <property type="match status" value="1"/>
</dbReference>
<dbReference type="FunFam" id="3.30.950.10:FF:000001">
    <property type="entry name" value="Siroheme synthase"/>
    <property type="match status" value="1"/>
</dbReference>
<dbReference type="FunFam" id="3.40.1010.10:FF:000001">
    <property type="entry name" value="Siroheme synthase"/>
    <property type="match status" value="1"/>
</dbReference>
<dbReference type="Gene3D" id="3.40.1010.10">
    <property type="entry name" value="Cobalt-precorrin-4 Transmethylase, Domain 1"/>
    <property type="match status" value="1"/>
</dbReference>
<dbReference type="Gene3D" id="3.30.950.10">
    <property type="entry name" value="Methyltransferase, Cobalt-precorrin-4 Transmethylase, Domain 2"/>
    <property type="match status" value="1"/>
</dbReference>
<dbReference type="Gene3D" id="3.40.50.720">
    <property type="entry name" value="NAD(P)-binding Rossmann-like Domain"/>
    <property type="match status" value="1"/>
</dbReference>
<dbReference type="Gene3D" id="1.10.8.210">
    <property type="entry name" value="Sirohaem synthase, dimerisation domain"/>
    <property type="match status" value="1"/>
</dbReference>
<dbReference type="Gene3D" id="3.30.160.110">
    <property type="entry name" value="Siroheme synthase, domain 2"/>
    <property type="match status" value="1"/>
</dbReference>
<dbReference type="HAMAP" id="MF_01646">
    <property type="entry name" value="Siroheme_synth"/>
    <property type="match status" value="1"/>
</dbReference>
<dbReference type="InterPro" id="IPR000878">
    <property type="entry name" value="4pyrrol_Mease"/>
</dbReference>
<dbReference type="InterPro" id="IPR035996">
    <property type="entry name" value="4pyrrol_Methylase_sf"/>
</dbReference>
<dbReference type="InterPro" id="IPR014777">
    <property type="entry name" value="4pyrrole_Mease_sub1"/>
</dbReference>
<dbReference type="InterPro" id="IPR014776">
    <property type="entry name" value="4pyrrole_Mease_sub2"/>
</dbReference>
<dbReference type="InterPro" id="IPR006366">
    <property type="entry name" value="CobA/CysG_C"/>
</dbReference>
<dbReference type="InterPro" id="IPR036291">
    <property type="entry name" value="NAD(P)-bd_dom_sf"/>
</dbReference>
<dbReference type="InterPro" id="IPR050161">
    <property type="entry name" value="Siro_Cobalamin_biosynth"/>
</dbReference>
<dbReference type="InterPro" id="IPR037115">
    <property type="entry name" value="Sirohaem_synt_dimer_dom_sf"/>
</dbReference>
<dbReference type="InterPro" id="IPR012409">
    <property type="entry name" value="Sirohaem_synth"/>
</dbReference>
<dbReference type="InterPro" id="IPR028281">
    <property type="entry name" value="Sirohaem_synthase_central"/>
</dbReference>
<dbReference type="InterPro" id="IPR019478">
    <property type="entry name" value="Sirohaem_synthase_dimer_dom"/>
</dbReference>
<dbReference type="InterPro" id="IPR006367">
    <property type="entry name" value="Sirohaem_synthase_N"/>
</dbReference>
<dbReference type="InterPro" id="IPR003043">
    <property type="entry name" value="Uropor_MeTrfase_CS"/>
</dbReference>
<dbReference type="NCBIfam" id="TIGR01469">
    <property type="entry name" value="cobA_cysG_Cterm"/>
    <property type="match status" value="1"/>
</dbReference>
<dbReference type="NCBIfam" id="TIGR01470">
    <property type="entry name" value="cysG_Nterm"/>
    <property type="match status" value="1"/>
</dbReference>
<dbReference type="NCBIfam" id="NF004790">
    <property type="entry name" value="PRK06136.1"/>
    <property type="match status" value="1"/>
</dbReference>
<dbReference type="NCBIfam" id="NF007922">
    <property type="entry name" value="PRK10637.1"/>
    <property type="match status" value="1"/>
</dbReference>
<dbReference type="PANTHER" id="PTHR45790:SF1">
    <property type="entry name" value="SIROHEME SYNTHASE"/>
    <property type="match status" value="1"/>
</dbReference>
<dbReference type="PANTHER" id="PTHR45790">
    <property type="entry name" value="SIROHEME SYNTHASE-RELATED"/>
    <property type="match status" value="1"/>
</dbReference>
<dbReference type="Pfam" id="PF10414">
    <property type="entry name" value="CysG_dimeriser"/>
    <property type="match status" value="1"/>
</dbReference>
<dbReference type="Pfam" id="PF13241">
    <property type="entry name" value="NAD_binding_7"/>
    <property type="match status" value="1"/>
</dbReference>
<dbReference type="Pfam" id="PF14824">
    <property type="entry name" value="Sirohm_synth_M"/>
    <property type="match status" value="1"/>
</dbReference>
<dbReference type="Pfam" id="PF00590">
    <property type="entry name" value="TP_methylase"/>
    <property type="match status" value="1"/>
</dbReference>
<dbReference type="PIRSF" id="PIRSF036426">
    <property type="entry name" value="Sirohaem_synth"/>
    <property type="match status" value="1"/>
</dbReference>
<dbReference type="SUPFAM" id="SSF51735">
    <property type="entry name" value="NAD(P)-binding Rossmann-fold domains"/>
    <property type="match status" value="1"/>
</dbReference>
<dbReference type="SUPFAM" id="SSF75615">
    <property type="entry name" value="Siroheme synthase middle domains-like"/>
    <property type="match status" value="1"/>
</dbReference>
<dbReference type="SUPFAM" id="SSF53790">
    <property type="entry name" value="Tetrapyrrole methylase"/>
    <property type="match status" value="1"/>
</dbReference>
<dbReference type="PROSITE" id="PS00840">
    <property type="entry name" value="SUMT_2"/>
    <property type="match status" value="1"/>
</dbReference>
<sequence length="465" mass="50371">MDFLPLFHSLQGRLALVVGGGEVALRKARLLADAGARLRVVAPQIHIELRHLVEQGGGELLERDYQDGDQPGCALIIAATDDEPLNAEVSRAANARGIPVNVVDAPALCSVIFPAIVDRSPLVVAVSSGGDAPVLARLIRAKLETWIPSTYGQLAGLASRFRHRVKELLPDLQQRRVFWENLFQGEIAERVLAGRPAEAERLLEEHLAGGLAHIATGEVYLVGAGPGDPDLLTFRALRLMQQADVVLYDRLVAPSILELCRRDAERLYVGKRRAEHAVPQDRINRLLVELASQGKRVLRLKGGDPFIFGRGGEEIDELAAHGIPFQVVPGITAASGCAAYAGIPLTHRDHAQSVRFVTGHLKDGTTDLPWQDLVAPGQTLVFYMGLVGLPVICEQLVAHGRSAQTPAALIQQGTTAQQRVFTGTLENLPQLVAEHEVHAPTLVIVGEVVQLRDKLAWFEGAREDA</sequence>